<evidence type="ECO:0000256" key="1">
    <source>
        <dbReference type="SAM" id="MobiDB-lite"/>
    </source>
</evidence>
<name>YKVB_SCHPO</name>
<proteinExistence type="predicted"/>
<reference key="1">
    <citation type="journal article" date="2002" name="Nature">
        <title>The genome sequence of Schizosaccharomyces pombe.</title>
        <authorList>
            <person name="Wood V."/>
            <person name="Gwilliam R."/>
            <person name="Rajandream M.A."/>
            <person name="Lyne M.H."/>
            <person name="Lyne R."/>
            <person name="Stewart A."/>
            <person name="Sgouros J.G."/>
            <person name="Peat N."/>
            <person name="Hayles J."/>
            <person name="Baker S.G."/>
            <person name="Basham D."/>
            <person name="Bowman S."/>
            <person name="Brooks K."/>
            <person name="Brown D."/>
            <person name="Brown S."/>
            <person name="Chillingworth T."/>
            <person name="Churcher C.M."/>
            <person name="Collins M."/>
            <person name="Connor R."/>
            <person name="Cronin A."/>
            <person name="Davis P."/>
            <person name="Feltwell T."/>
            <person name="Fraser A."/>
            <person name="Gentles S."/>
            <person name="Goble A."/>
            <person name="Hamlin N."/>
            <person name="Harris D.E."/>
            <person name="Hidalgo J."/>
            <person name="Hodgson G."/>
            <person name="Holroyd S."/>
            <person name="Hornsby T."/>
            <person name="Howarth S."/>
            <person name="Huckle E.J."/>
            <person name="Hunt S."/>
            <person name="Jagels K."/>
            <person name="James K.D."/>
            <person name="Jones L."/>
            <person name="Jones M."/>
            <person name="Leather S."/>
            <person name="McDonald S."/>
            <person name="McLean J."/>
            <person name="Mooney P."/>
            <person name="Moule S."/>
            <person name="Mungall K.L."/>
            <person name="Murphy L.D."/>
            <person name="Niblett D."/>
            <person name="Odell C."/>
            <person name="Oliver K."/>
            <person name="O'Neil S."/>
            <person name="Pearson D."/>
            <person name="Quail M.A."/>
            <person name="Rabbinowitsch E."/>
            <person name="Rutherford K.M."/>
            <person name="Rutter S."/>
            <person name="Saunders D."/>
            <person name="Seeger K."/>
            <person name="Sharp S."/>
            <person name="Skelton J."/>
            <person name="Simmonds M.N."/>
            <person name="Squares R."/>
            <person name="Squares S."/>
            <person name="Stevens K."/>
            <person name="Taylor K."/>
            <person name="Taylor R.G."/>
            <person name="Tivey A."/>
            <person name="Walsh S.V."/>
            <person name="Warren T."/>
            <person name="Whitehead S."/>
            <person name="Woodward J.R."/>
            <person name="Volckaert G."/>
            <person name="Aert R."/>
            <person name="Robben J."/>
            <person name="Grymonprez B."/>
            <person name="Weltjens I."/>
            <person name="Vanstreels E."/>
            <person name="Rieger M."/>
            <person name="Schaefer M."/>
            <person name="Mueller-Auer S."/>
            <person name="Gabel C."/>
            <person name="Fuchs M."/>
            <person name="Duesterhoeft A."/>
            <person name="Fritzc C."/>
            <person name="Holzer E."/>
            <person name="Moestl D."/>
            <person name="Hilbert H."/>
            <person name="Borzym K."/>
            <person name="Langer I."/>
            <person name="Beck A."/>
            <person name="Lehrach H."/>
            <person name="Reinhardt R."/>
            <person name="Pohl T.M."/>
            <person name="Eger P."/>
            <person name="Zimmermann W."/>
            <person name="Wedler H."/>
            <person name="Wambutt R."/>
            <person name="Purnelle B."/>
            <person name="Goffeau A."/>
            <person name="Cadieu E."/>
            <person name="Dreano S."/>
            <person name="Gloux S."/>
            <person name="Lelaure V."/>
            <person name="Mottier S."/>
            <person name="Galibert F."/>
            <person name="Aves S.J."/>
            <person name="Xiang Z."/>
            <person name="Hunt C."/>
            <person name="Moore K."/>
            <person name="Hurst S.M."/>
            <person name="Lucas M."/>
            <person name="Rochet M."/>
            <person name="Gaillardin C."/>
            <person name="Tallada V.A."/>
            <person name="Garzon A."/>
            <person name="Thode G."/>
            <person name="Daga R.R."/>
            <person name="Cruzado L."/>
            <person name="Jimenez J."/>
            <person name="Sanchez M."/>
            <person name="del Rey F."/>
            <person name="Benito J."/>
            <person name="Dominguez A."/>
            <person name="Revuelta J.L."/>
            <person name="Moreno S."/>
            <person name="Armstrong J."/>
            <person name="Forsburg S.L."/>
            <person name="Cerutti L."/>
            <person name="Lowe T."/>
            <person name="McCombie W.R."/>
            <person name="Paulsen I."/>
            <person name="Potashkin J."/>
            <person name="Shpakovski G.V."/>
            <person name="Ussery D."/>
            <person name="Barrell B.G."/>
            <person name="Nurse P."/>
        </authorList>
    </citation>
    <scope>NUCLEOTIDE SEQUENCE [LARGE SCALE GENOMIC DNA]</scope>
    <source>
        <strain>972 / ATCC 24843</strain>
    </source>
</reference>
<reference key="2">
    <citation type="journal article" date="2011" name="Science">
        <title>Comparative functional genomics of the fission yeasts.</title>
        <authorList>
            <person name="Rhind N."/>
            <person name="Chen Z."/>
            <person name="Yassour M."/>
            <person name="Thompson D.A."/>
            <person name="Haas B.J."/>
            <person name="Habib N."/>
            <person name="Wapinski I."/>
            <person name="Roy S."/>
            <person name="Lin M.F."/>
            <person name="Heiman D.I."/>
            <person name="Young S.K."/>
            <person name="Furuya K."/>
            <person name="Guo Y."/>
            <person name="Pidoux A."/>
            <person name="Chen H.M."/>
            <person name="Robbertse B."/>
            <person name="Goldberg J.M."/>
            <person name="Aoki K."/>
            <person name="Bayne E.H."/>
            <person name="Berlin A.M."/>
            <person name="Desjardins C.A."/>
            <person name="Dobbs E."/>
            <person name="Dukaj L."/>
            <person name="Fan L."/>
            <person name="FitzGerald M.G."/>
            <person name="French C."/>
            <person name="Gujja S."/>
            <person name="Hansen K."/>
            <person name="Keifenheim D."/>
            <person name="Levin J.Z."/>
            <person name="Mosher R.A."/>
            <person name="Mueller C.A."/>
            <person name="Pfiffner J."/>
            <person name="Priest M."/>
            <person name="Russ C."/>
            <person name="Smialowska A."/>
            <person name="Swoboda P."/>
            <person name="Sykes S.M."/>
            <person name="Vaughn M."/>
            <person name="Vengrova S."/>
            <person name="Yoder R."/>
            <person name="Zeng Q."/>
            <person name="Allshire R."/>
            <person name="Baulcombe D."/>
            <person name="Birren B.W."/>
            <person name="Brown W."/>
            <person name="Ekwall K."/>
            <person name="Kellis M."/>
            <person name="Leatherwood J."/>
            <person name="Levin H."/>
            <person name="Margalit H."/>
            <person name="Martienssen R."/>
            <person name="Nieduszynski C.A."/>
            <person name="Spatafora J.W."/>
            <person name="Friedman N."/>
            <person name="Dalgaard J.Z."/>
            <person name="Baumann P."/>
            <person name="Niki H."/>
            <person name="Regev A."/>
            <person name="Nusbaum C."/>
        </authorList>
    </citation>
    <scope>IDENTIFICATION</scope>
</reference>
<gene>
    <name type="ORF">SPAC959.11</name>
</gene>
<accession>G2TRM5</accession>
<sequence length="121" mass="14260">MYYVACVFVYNKYIFTFEKENFVEKMNYRLRDKTFNFNQMAQKRNKQSKKPKQTSKGVKKSSKQNKNSSKNNKYQQNVLLQSIDDYNTTQSVLRSAHNSGSKMSDISNSIQLLSMTKKQEN</sequence>
<keyword id="KW-1185">Reference proteome</keyword>
<organism>
    <name type="scientific">Schizosaccharomyces pombe (strain 972 / ATCC 24843)</name>
    <name type="common">Fission yeast</name>
    <dbReference type="NCBI Taxonomy" id="284812"/>
    <lineage>
        <taxon>Eukaryota</taxon>
        <taxon>Fungi</taxon>
        <taxon>Dikarya</taxon>
        <taxon>Ascomycota</taxon>
        <taxon>Taphrinomycotina</taxon>
        <taxon>Schizosaccharomycetes</taxon>
        <taxon>Schizosaccharomycetales</taxon>
        <taxon>Schizosaccharomycetaceae</taxon>
        <taxon>Schizosaccharomyces</taxon>
    </lineage>
</organism>
<feature type="chain" id="PRO_0000416646" description="Putative uncharacterized protein C959.11">
    <location>
        <begin position="1"/>
        <end position="121"/>
    </location>
</feature>
<feature type="region of interest" description="Disordered" evidence="1">
    <location>
        <begin position="38"/>
        <end position="76"/>
    </location>
</feature>
<feature type="region of interest" description="Disordered" evidence="1">
    <location>
        <begin position="91"/>
        <end position="121"/>
    </location>
</feature>
<feature type="compositionally biased region" description="Basic residues" evidence="1">
    <location>
        <begin position="43"/>
        <end position="63"/>
    </location>
</feature>
<feature type="compositionally biased region" description="Low complexity" evidence="1">
    <location>
        <begin position="64"/>
        <end position="76"/>
    </location>
</feature>
<dbReference type="EMBL" id="CU329670">
    <property type="protein sequence ID" value="CCD31327.1"/>
    <property type="molecule type" value="Genomic_DNA"/>
</dbReference>
<dbReference type="RefSeq" id="XP_004001782.1">
    <property type="nucleotide sequence ID" value="XM_004001733.1"/>
</dbReference>
<dbReference type="SMR" id="G2TRM5"/>
<dbReference type="BioGRID" id="4254635">
    <property type="interactions" value="1"/>
</dbReference>
<dbReference type="iPTMnet" id="G2TRM5"/>
<dbReference type="PaxDb" id="4896-SPAC959.11.1"/>
<dbReference type="EnsemblFungi" id="SPAC959.11.1">
    <property type="protein sequence ID" value="SPAC959.11.1:pep"/>
    <property type="gene ID" value="SPAC959.11"/>
</dbReference>
<dbReference type="PomBase" id="SPAC959.11"/>
<dbReference type="VEuPathDB" id="FungiDB:SPAC959.11"/>
<dbReference type="HOGENOM" id="CLU_2039416_0_0_1"/>
<dbReference type="InParanoid" id="G2TRM5"/>
<dbReference type="OMA" id="MYYVACV"/>
<dbReference type="PRO" id="PR:G2TRM5"/>
<dbReference type="Proteomes" id="UP000002485">
    <property type="component" value="Chromosome I"/>
</dbReference>
<protein>
    <recommendedName>
        <fullName>Putative uncharacterized protein C959.11</fullName>
    </recommendedName>
</protein>